<name>F184B_HUMAN</name>
<dbReference type="EMBL" id="AB033102">
    <property type="protein sequence ID" value="BAA86590.1"/>
    <property type="status" value="ALT_INIT"/>
    <property type="molecule type" value="mRNA"/>
</dbReference>
<dbReference type="EMBL" id="AC005768">
    <property type="status" value="NOT_ANNOTATED_CDS"/>
    <property type="molecule type" value="Genomic_DNA"/>
</dbReference>
<dbReference type="EMBL" id="AC006160">
    <property type="status" value="NOT_ANNOTATED_CDS"/>
    <property type="molecule type" value="Genomic_DNA"/>
</dbReference>
<dbReference type="CCDS" id="CCDS47033.1"/>
<dbReference type="RefSeq" id="NP_056503.1">
    <property type="nucleotide sequence ID" value="NM_015688.2"/>
</dbReference>
<dbReference type="SMR" id="Q9ULE4"/>
<dbReference type="BioGRID" id="118030">
    <property type="interactions" value="12"/>
</dbReference>
<dbReference type="FunCoup" id="Q9ULE4">
    <property type="interactions" value="7"/>
</dbReference>
<dbReference type="IntAct" id="Q9ULE4">
    <property type="interactions" value="3"/>
</dbReference>
<dbReference type="STRING" id="9606.ENSP00000265018"/>
<dbReference type="GlyGen" id="Q9ULE4">
    <property type="glycosylation" value="1 site, 1 O-linked glycan (1 site)"/>
</dbReference>
<dbReference type="iPTMnet" id="Q9ULE4"/>
<dbReference type="PhosphoSitePlus" id="Q9ULE4"/>
<dbReference type="BioMuta" id="FAM184B"/>
<dbReference type="DMDM" id="296439355"/>
<dbReference type="jPOST" id="Q9ULE4"/>
<dbReference type="MassIVE" id="Q9ULE4"/>
<dbReference type="PaxDb" id="9606-ENSP00000265018"/>
<dbReference type="PeptideAtlas" id="Q9ULE4"/>
<dbReference type="ProteomicsDB" id="85010"/>
<dbReference type="Pumba" id="Q9ULE4"/>
<dbReference type="Antibodypedia" id="23092">
    <property type="antibodies" value="23 antibodies from 8 providers"/>
</dbReference>
<dbReference type="DNASU" id="27146"/>
<dbReference type="Ensembl" id="ENST00000265018.4">
    <property type="protein sequence ID" value="ENSP00000265018.3"/>
    <property type="gene ID" value="ENSG00000047662.5"/>
</dbReference>
<dbReference type="GeneID" id="27146"/>
<dbReference type="KEGG" id="hsa:27146"/>
<dbReference type="MANE-Select" id="ENST00000265018.4">
    <property type="protein sequence ID" value="ENSP00000265018.3"/>
    <property type="RefSeq nucleotide sequence ID" value="NM_015688.2"/>
    <property type="RefSeq protein sequence ID" value="NP_056503.1"/>
</dbReference>
<dbReference type="UCSC" id="uc003gpm.5">
    <property type="organism name" value="human"/>
</dbReference>
<dbReference type="AGR" id="HGNC:29235"/>
<dbReference type="CTD" id="27146"/>
<dbReference type="DisGeNET" id="27146"/>
<dbReference type="GeneCards" id="FAM184B"/>
<dbReference type="HGNC" id="HGNC:29235">
    <property type="gene designation" value="FAM184B"/>
</dbReference>
<dbReference type="HPA" id="ENSG00000047662">
    <property type="expression patterns" value="Tissue enhanced (brain, retina, skeletal muscle)"/>
</dbReference>
<dbReference type="MIM" id="619945">
    <property type="type" value="gene"/>
</dbReference>
<dbReference type="neXtProt" id="NX_Q9ULE4"/>
<dbReference type="OpenTargets" id="ENSG00000047662"/>
<dbReference type="PharmGKB" id="PA164719809"/>
<dbReference type="VEuPathDB" id="HostDB:ENSG00000047662"/>
<dbReference type="eggNOG" id="ENOG502RRRX">
    <property type="taxonomic scope" value="Eukaryota"/>
</dbReference>
<dbReference type="GeneTree" id="ENSGT00530000063669"/>
<dbReference type="HOGENOM" id="CLU_005374_0_0_1"/>
<dbReference type="InParanoid" id="Q9ULE4"/>
<dbReference type="OMA" id="PQELDCQ"/>
<dbReference type="OrthoDB" id="75801at2759"/>
<dbReference type="PAN-GO" id="Q9ULE4">
    <property type="GO annotations" value="0 GO annotations based on evolutionary models"/>
</dbReference>
<dbReference type="PhylomeDB" id="Q9ULE4"/>
<dbReference type="TreeFam" id="TF316006"/>
<dbReference type="PathwayCommons" id="Q9ULE4"/>
<dbReference type="SignaLink" id="Q9ULE4"/>
<dbReference type="BioGRID-ORCS" id="27146">
    <property type="hits" value="8 hits in 1140 CRISPR screens"/>
</dbReference>
<dbReference type="ChiTaRS" id="FAM184B">
    <property type="organism name" value="human"/>
</dbReference>
<dbReference type="GenomeRNAi" id="27146"/>
<dbReference type="Pharos" id="Q9ULE4">
    <property type="development level" value="Tdark"/>
</dbReference>
<dbReference type="PRO" id="PR:Q9ULE4"/>
<dbReference type="Proteomes" id="UP000005640">
    <property type="component" value="Chromosome 4"/>
</dbReference>
<dbReference type="RNAct" id="Q9ULE4">
    <property type="molecule type" value="protein"/>
</dbReference>
<dbReference type="Bgee" id="ENSG00000047662">
    <property type="expression patterns" value="Expressed in secondary oocyte and 115 other cell types or tissues"/>
</dbReference>
<dbReference type="InterPro" id="IPR039478">
    <property type="entry name" value="FAM184A/B_N"/>
</dbReference>
<dbReference type="PANTHER" id="PTHR18870:SF8">
    <property type="entry name" value="PROTEIN FAM184B"/>
    <property type="match status" value="1"/>
</dbReference>
<dbReference type="PANTHER" id="PTHR18870">
    <property type="entry name" value="PROTEIN TAG-278-RELATED"/>
    <property type="match status" value="1"/>
</dbReference>
<dbReference type="Pfam" id="PF15665">
    <property type="entry name" value="FAM184"/>
    <property type="match status" value="1"/>
</dbReference>
<comment type="similarity">
    <text evidence="4">Belongs to the FAM184 family.</text>
</comment>
<comment type="sequence caution" evidence="4">
    <conflict type="erroneous initiation">
        <sequence resource="EMBL-CDS" id="BAA86590"/>
    </conflict>
    <text>Extended N-terminus.</text>
</comment>
<accession>Q9ULE4</accession>
<feature type="chain" id="PRO_0000320551" description="Protein FAM184B">
    <location>
        <begin position="1"/>
        <end position="1060"/>
    </location>
</feature>
<feature type="region of interest" description="Disordered" evidence="2">
    <location>
        <begin position="1"/>
        <end position="24"/>
    </location>
</feature>
<feature type="region of interest" description="Disordered" evidence="2">
    <location>
        <begin position="165"/>
        <end position="191"/>
    </location>
</feature>
<feature type="region of interest" description="Disordered" evidence="2">
    <location>
        <begin position="532"/>
        <end position="566"/>
    </location>
</feature>
<feature type="region of interest" description="Disordered" evidence="2">
    <location>
        <begin position="681"/>
        <end position="700"/>
    </location>
</feature>
<feature type="region of interest" description="Disordered" evidence="2">
    <location>
        <begin position="762"/>
        <end position="803"/>
    </location>
</feature>
<feature type="region of interest" description="Disordered" evidence="2">
    <location>
        <begin position="994"/>
        <end position="1050"/>
    </location>
</feature>
<feature type="coiled-coil region" evidence="1">
    <location>
        <begin position="51"/>
        <end position="159"/>
    </location>
</feature>
<feature type="coiled-coil region" evidence="1">
    <location>
        <begin position="192"/>
        <end position="333"/>
    </location>
</feature>
<feature type="coiled-coil region" evidence="1">
    <location>
        <begin position="402"/>
        <end position="502"/>
    </location>
</feature>
<feature type="coiled-coil region" evidence="1">
    <location>
        <begin position="584"/>
        <end position="769"/>
    </location>
</feature>
<feature type="coiled-coil region" evidence="1">
    <location>
        <begin position="806"/>
        <end position="934"/>
    </location>
</feature>
<feature type="compositionally biased region" description="Polar residues" evidence="2">
    <location>
        <begin position="1"/>
        <end position="17"/>
    </location>
</feature>
<feature type="compositionally biased region" description="Basic and acidic residues" evidence="2">
    <location>
        <begin position="536"/>
        <end position="554"/>
    </location>
</feature>
<feature type="compositionally biased region" description="Basic and acidic residues" evidence="2">
    <location>
        <begin position="681"/>
        <end position="690"/>
    </location>
</feature>
<feature type="compositionally biased region" description="Basic and acidic residues" evidence="2">
    <location>
        <begin position="773"/>
        <end position="785"/>
    </location>
</feature>
<feature type="compositionally biased region" description="Polar residues" evidence="2">
    <location>
        <begin position="994"/>
        <end position="1009"/>
    </location>
</feature>
<feature type="compositionally biased region" description="Polar residues" evidence="2">
    <location>
        <begin position="1018"/>
        <end position="1030"/>
    </location>
</feature>
<feature type="sequence variant" id="VAR_039202" description="In dbSNP:rs16895365.">
    <original>N</original>
    <variation>S</variation>
    <location>
        <position position="952"/>
    </location>
</feature>
<feature type="sequence variant" id="VAR_039203" description="In dbSNP:rs6825562." evidence="3">
    <original>V</original>
    <variation>A</variation>
    <location>
        <position position="1042"/>
    </location>
</feature>
<feature type="sequence conflict" description="In Ref. 1; BAA86590." evidence="4" ref="1">
    <original>D</original>
    <variation>H</variation>
    <location>
        <position position="299"/>
    </location>
</feature>
<feature type="sequence conflict" description="In Ref. 1; BAA86590." evidence="4" ref="1">
    <original>R</original>
    <variation>H</variation>
    <location>
        <position position="643"/>
    </location>
</feature>
<feature type="sequence conflict" description="In Ref. 1; BAA86590." evidence="4" ref="1">
    <original>R</original>
    <variation>W</variation>
    <location>
        <position position="784"/>
    </location>
</feature>
<gene>
    <name type="primary">FAM184B</name>
    <name type="synonym">KIAA1276</name>
</gene>
<organism>
    <name type="scientific">Homo sapiens</name>
    <name type="common">Human</name>
    <dbReference type="NCBI Taxonomy" id="9606"/>
    <lineage>
        <taxon>Eukaryota</taxon>
        <taxon>Metazoa</taxon>
        <taxon>Chordata</taxon>
        <taxon>Craniata</taxon>
        <taxon>Vertebrata</taxon>
        <taxon>Euteleostomi</taxon>
        <taxon>Mammalia</taxon>
        <taxon>Eutheria</taxon>
        <taxon>Euarchontoglires</taxon>
        <taxon>Primates</taxon>
        <taxon>Haplorrhini</taxon>
        <taxon>Catarrhini</taxon>
        <taxon>Hominidae</taxon>
        <taxon>Homo</taxon>
    </lineage>
</organism>
<proteinExistence type="evidence at protein level"/>
<sequence>MASALNSKINPPGTCQGSKADGGAGWRMDCDPQMHVKMCKKIAQLTKVIYALNTRQDEAEASMEALREAHQEELQNAVAETKARLLQEQGCAEEEALLQRIQALESALELQKRLTEEALAESASCRLETKERELRVEAEHAERVLTLSREMLELKADYERRLQHLTSHEATPQGRLPQESPETKSEPGQGPEMQEVLLEVQRLRVENQQLSKDYARKAEELQATYERENEAIRQAMQQSVSQALWQWQEKESDLRKNFQVQESALQAQVRKLEGDLEHRGRKISDLKKYAQKLKERIQDLDVQLKEARQENSELKGTAKKLGEKLAVAKDRMMLQECRGTQQTDAMKTELVSENKVLREENDLEAGNLHPQQDQSCLKECPCMKGGTDMQTKKEASAETEYMKQQYEEDLRKIKHQTEEEKKHLKDQLVKRLEDLVKKHTVEIKSVRSSVEAERKKLQREVEAQLEEVRKKSEKEIKQLEEEKAALNVKLQNSLLEVLRLEEFIQQNKTRPTGAEESPQELGRQHCSILETQDPCLKLDETSPRGEEYQDKLAAEEGTSSDEEERTKVLLKEGSDPQPPLGSLLKEKTSKIQRLEEDWQSQKAKLQAQVSQMQQALEQCTSNYREDLQALKQLSDLEREKLQRELQETTQQNHAMKAQLEASHQRALRMLEKARHQELKATEERLKKESSHSLQIQHQTHRLELQALEEKARQELQEERERMQAQQALLLESLRQELSEQQAACSGHQKDLEALQAELRALGRQQASSQCPGDSKDHIIATEERGGPGQAGSPPGAAGQGSGEGCGLWEENAQLQDAVRRLRAEVEQHQQEAQKLRDQRRFLEETQQAQRAREVETLRQEHRKEMQAMVADFSSAQAQLQARLAALEAELKDSGEKPGKGASRPEDLQLIGRLQTRLKEREDIIKQLTEERRFHYAAFPSAMSHRNRSFSFNPHPGYLTPSMKKKKVEDVPSRVVSVPNLASYAKNFLSGDLSSRINAPPITTSPSLDPSPSCGRTYKPNQSTDAKTATRTPDGETAQAKEVQQKQGSPHQEWFTKYFSF</sequence>
<reference key="1">
    <citation type="journal article" date="1999" name="DNA Res.">
        <title>Prediction of the coding sequences of unidentified human genes. XV. The complete sequences of 100 new cDNA clones from brain which code for large proteins in vitro.</title>
        <authorList>
            <person name="Nagase T."/>
            <person name="Ishikawa K."/>
            <person name="Kikuno R."/>
            <person name="Hirosawa M."/>
            <person name="Nomura N."/>
            <person name="Ohara O."/>
        </authorList>
    </citation>
    <scope>NUCLEOTIDE SEQUENCE [LARGE SCALE MRNA]</scope>
    <scope>VARIANT ALA-1042</scope>
    <source>
        <tissue>Brain</tissue>
    </source>
</reference>
<reference key="2">
    <citation type="journal article" date="2002" name="DNA Res.">
        <title>Construction of expression-ready cDNA clones for KIAA genes: manual curation of 330 KIAA cDNA clones.</title>
        <authorList>
            <person name="Nakajima D."/>
            <person name="Okazaki N."/>
            <person name="Yamakawa H."/>
            <person name="Kikuno R."/>
            <person name="Ohara O."/>
            <person name="Nagase T."/>
        </authorList>
    </citation>
    <scope>SEQUENCE REVISION</scope>
</reference>
<reference key="3">
    <citation type="journal article" date="2005" name="Nature">
        <title>Generation and annotation of the DNA sequences of human chromosomes 2 and 4.</title>
        <authorList>
            <person name="Hillier L.W."/>
            <person name="Graves T.A."/>
            <person name="Fulton R.S."/>
            <person name="Fulton L.A."/>
            <person name="Pepin K.H."/>
            <person name="Minx P."/>
            <person name="Wagner-McPherson C."/>
            <person name="Layman D."/>
            <person name="Wylie K."/>
            <person name="Sekhon M."/>
            <person name="Becker M.C."/>
            <person name="Fewell G.A."/>
            <person name="Delehaunty K.D."/>
            <person name="Miner T.L."/>
            <person name="Nash W.E."/>
            <person name="Kremitzki C."/>
            <person name="Oddy L."/>
            <person name="Du H."/>
            <person name="Sun H."/>
            <person name="Bradshaw-Cordum H."/>
            <person name="Ali J."/>
            <person name="Carter J."/>
            <person name="Cordes M."/>
            <person name="Harris A."/>
            <person name="Isak A."/>
            <person name="van Brunt A."/>
            <person name="Nguyen C."/>
            <person name="Du F."/>
            <person name="Courtney L."/>
            <person name="Kalicki J."/>
            <person name="Ozersky P."/>
            <person name="Abbott S."/>
            <person name="Armstrong J."/>
            <person name="Belter E.A."/>
            <person name="Caruso L."/>
            <person name="Cedroni M."/>
            <person name="Cotton M."/>
            <person name="Davidson T."/>
            <person name="Desai A."/>
            <person name="Elliott G."/>
            <person name="Erb T."/>
            <person name="Fronick C."/>
            <person name="Gaige T."/>
            <person name="Haakenson W."/>
            <person name="Haglund K."/>
            <person name="Holmes A."/>
            <person name="Harkins R."/>
            <person name="Kim K."/>
            <person name="Kruchowski S.S."/>
            <person name="Strong C.M."/>
            <person name="Grewal N."/>
            <person name="Goyea E."/>
            <person name="Hou S."/>
            <person name="Levy A."/>
            <person name="Martinka S."/>
            <person name="Mead K."/>
            <person name="McLellan M.D."/>
            <person name="Meyer R."/>
            <person name="Randall-Maher J."/>
            <person name="Tomlinson C."/>
            <person name="Dauphin-Kohlberg S."/>
            <person name="Kozlowicz-Reilly A."/>
            <person name="Shah N."/>
            <person name="Swearengen-Shahid S."/>
            <person name="Snider J."/>
            <person name="Strong J.T."/>
            <person name="Thompson J."/>
            <person name="Yoakum M."/>
            <person name="Leonard S."/>
            <person name="Pearman C."/>
            <person name="Trani L."/>
            <person name="Radionenko M."/>
            <person name="Waligorski J.E."/>
            <person name="Wang C."/>
            <person name="Rock S.M."/>
            <person name="Tin-Wollam A.-M."/>
            <person name="Maupin R."/>
            <person name="Latreille P."/>
            <person name="Wendl M.C."/>
            <person name="Yang S.-P."/>
            <person name="Pohl C."/>
            <person name="Wallis J.W."/>
            <person name="Spieth J."/>
            <person name="Bieri T.A."/>
            <person name="Berkowicz N."/>
            <person name="Nelson J.O."/>
            <person name="Osborne J."/>
            <person name="Ding L."/>
            <person name="Meyer R."/>
            <person name="Sabo A."/>
            <person name="Shotland Y."/>
            <person name="Sinha P."/>
            <person name="Wohldmann P.E."/>
            <person name="Cook L.L."/>
            <person name="Hickenbotham M.T."/>
            <person name="Eldred J."/>
            <person name="Williams D."/>
            <person name="Jones T.A."/>
            <person name="She X."/>
            <person name="Ciccarelli F.D."/>
            <person name="Izaurralde E."/>
            <person name="Taylor J."/>
            <person name="Schmutz J."/>
            <person name="Myers R.M."/>
            <person name="Cox D.R."/>
            <person name="Huang X."/>
            <person name="McPherson J.D."/>
            <person name="Mardis E.R."/>
            <person name="Clifton S.W."/>
            <person name="Warren W.C."/>
            <person name="Chinwalla A.T."/>
            <person name="Eddy S.R."/>
            <person name="Marra M.A."/>
            <person name="Ovcharenko I."/>
            <person name="Furey T.S."/>
            <person name="Miller W."/>
            <person name="Eichler E.E."/>
            <person name="Bork P."/>
            <person name="Suyama M."/>
            <person name="Torrents D."/>
            <person name="Waterston R.H."/>
            <person name="Wilson R.K."/>
        </authorList>
    </citation>
    <scope>NUCLEOTIDE SEQUENCE [LARGE SCALE GENOMIC DNA]</scope>
</reference>
<protein>
    <recommendedName>
        <fullName>Protein FAM184B</fullName>
    </recommendedName>
</protein>
<keyword id="KW-0175">Coiled coil</keyword>
<keyword id="KW-1267">Proteomics identification</keyword>
<keyword id="KW-1185">Reference proteome</keyword>
<evidence type="ECO:0000255" key="1"/>
<evidence type="ECO:0000256" key="2">
    <source>
        <dbReference type="SAM" id="MobiDB-lite"/>
    </source>
</evidence>
<evidence type="ECO:0000269" key="3">
    <source>
    </source>
</evidence>
<evidence type="ECO:0000305" key="4"/>